<evidence type="ECO:0000255" key="1">
    <source>
        <dbReference type="HAMAP-Rule" id="MF_00123"/>
    </source>
</evidence>
<proteinExistence type="inferred from homology"/>
<protein>
    <recommendedName>
        <fullName evidence="1">Arginine--tRNA ligase</fullName>
        <ecNumber evidence="1">6.1.1.19</ecNumber>
    </recommendedName>
    <alternativeName>
        <fullName evidence="1">Arginyl-tRNA synthetase</fullName>
        <shortName evidence="1">ArgRS</shortName>
    </alternativeName>
</protein>
<name>SYR_HALHL</name>
<comment type="catalytic activity">
    <reaction evidence="1">
        <text>tRNA(Arg) + L-arginine + ATP = L-arginyl-tRNA(Arg) + AMP + diphosphate</text>
        <dbReference type="Rhea" id="RHEA:20301"/>
        <dbReference type="Rhea" id="RHEA-COMP:9658"/>
        <dbReference type="Rhea" id="RHEA-COMP:9673"/>
        <dbReference type="ChEBI" id="CHEBI:30616"/>
        <dbReference type="ChEBI" id="CHEBI:32682"/>
        <dbReference type="ChEBI" id="CHEBI:33019"/>
        <dbReference type="ChEBI" id="CHEBI:78442"/>
        <dbReference type="ChEBI" id="CHEBI:78513"/>
        <dbReference type="ChEBI" id="CHEBI:456215"/>
        <dbReference type="EC" id="6.1.1.19"/>
    </reaction>
</comment>
<comment type="subunit">
    <text evidence="1">Monomer.</text>
</comment>
<comment type="subcellular location">
    <subcellularLocation>
        <location evidence="1">Cytoplasm</location>
    </subcellularLocation>
</comment>
<comment type="similarity">
    <text evidence="1">Belongs to the class-I aminoacyl-tRNA synthetase family.</text>
</comment>
<sequence>MKRHVASLLAQALKAMREAGELPADLELPEVQVERARDRAHGDYAANTAMVLAKPARQKPRDLAETIRSRLPASEAIAGVEIAGPGFLNFTLTTAARQESVRVALRQGAEYGRSDVGAGHRVHIEFVSANPTGPLHVGHGRGAAFGDALASVLEAAGYHVHREYYVNDAGRQMDILAASLWLRYLEAAGEPVSFPNKGYQGDYIVTHARELFEADGREHVRTAAELGAGLPAEDDDPEGYLDALVARSRELLGETAYRRVLDFALEAILGDIRADLDAFGVHYHRYFSERQLVDQGRIEHALERLDQAGYTYRADGALWFQASVFGDDKDRVLRRDNGLTTYFAADVAYHLDKIERGFDTLVNVWGADHHGYVPRVQAALKALGVDAERLDVRLVQFAILYRGGEKLPMSTRSGEFVTLRELRDEVGKDAARFFYVMRRSEQHMDFDLDLAKSESADNPVYYCQYAHARICSVFRQLEERGLACRVTPDEAALERLDAEHEAILLDLLGRYPEVIESAALAREPHQVAQYLRELAAAFHTYYNAVPFIIDDEALRDARLTLVQATRQVLANGLGLLGVDAPQSM</sequence>
<dbReference type="EC" id="6.1.1.19" evidence="1"/>
<dbReference type="EMBL" id="CP000544">
    <property type="protein sequence ID" value="ABM63179.1"/>
    <property type="molecule type" value="Genomic_DNA"/>
</dbReference>
<dbReference type="RefSeq" id="WP_011815201.1">
    <property type="nucleotide sequence ID" value="NC_008789.1"/>
</dbReference>
<dbReference type="SMR" id="A1WZR7"/>
<dbReference type="STRING" id="349124.Hhal_2416"/>
<dbReference type="KEGG" id="hha:Hhal_2416"/>
<dbReference type="eggNOG" id="COG0018">
    <property type="taxonomic scope" value="Bacteria"/>
</dbReference>
<dbReference type="HOGENOM" id="CLU_006406_0_1_6"/>
<dbReference type="OrthoDB" id="9803211at2"/>
<dbReference type="Proteomes" id="UP000000647">
    <property type="component" value="Chromosome"/>
</dbReference>
<dbReference type="GO" id="GO:0005737">
    <property type="term" value="C:cytoplasm"/>
    <property type="evidence" value="ECO:0007669"/>
    <property type="project" value="UniProtKB-SubCell"/>
</dbReference>
<dbReference type="GO" id="GO:0004814">
    <property type="term" value="F:arginine-tRNA ligase activity"/>
    <property type="evidence" value="ECO:0007669"/>
    <property type="project" value="UniProtKB-UniRule"/>
</dbReference>
<dbReference type="GO" id="GO:0005524">
    <property type="term" value="F:ATP binding"/>
    <property type="evidence" value="ECO:0007669"/>
    <property type="project" value="UniProtKB-UniRule"/>
</dbReference>
<dbReference type="GO" id="GO:0006420">
    <property type="term" value="P:arginyl-tRNA aminoacylation"/>
    <property type="evidence" value="ECO:0007669"/>
    <property type="project" value="UniProtKB-UniRule"/>
</dbReference>
<dbReference type="CDD" id="cd00671">
    <property type="entry name" value="ArgRS_core"/>
    <property type="match status" value="1"/>
</dbReference>
<dbReference type="FunFam" id="1.10.730.10:FF:000008">
    <property type="entry name" value="Arginine--tRNA ligase"/>
    <property type="match status" value="1"/>
</dbReference>
<dbReference type="FunFam" id="3.30.1360.70:FF:000003">
    <property type="entry name" value="Arginine--tRNA ligase"/>
    <property type="match status" value="1"/>
</dbReference>
<dbReference type="FunFam" id="3.40.50.620:FF:000062">
    <property type="entry name" value="Arginine--tRNA ligase"/>
    <property type="match status" value="1"/>
</dbReference>
<dbReference type="Gene3D" id="3.30.1360.70">
    <property type="entry name" value="Arginyl tRNA synthetase N-terminal domain"/>
    <property type="match status" value="1"/>
</dbReference>
<dbReference type="Gene3D" id="3.40.50.620">
    <property type="entry name" value="HUPs"/>
    <property type="match status" value="1"/>
</dbReference>
<dbReference type="Gene3D" id="1.10.730.10">
    <property type="entry name" value="Isoleucyl-tRNA Synthetase, Domain 1"/>
    <property type="match status" value="1"/>
</dbReference>
<dbReference type="HAMAP" id="MF_00123">
    <property type="entry name" value="Arg_tRNA_synth"/>
    <property type="match status" value="1"/>
</dbReference>
<dbReference type="InterPro" id="IPR001412">
    <property type="entry name" value="aa-tRNA-synth_I_CS"/>
</dbReference>
<dbReference type="InterPro" id="IPR001278">
    <property type="entry name" value="Arg-tRNA-ligase"/>
</dbReference>
<dbReference type="InterPro" id="IPR005148">
    <property type="entry name" value="Arg-tRNA-synth_N"/>
</dbReference>
<dbReference type="InterPro" id="IPR036695">
    <property type="entry name" value="Arg-tRNA-synth_N_sf"/>
</dbReference>
<dbReference type="InterPro" id="IPR035684">
    <property type="entry name" value="ArgRS_core"/>
</dbReference>
<dbReference type="InterPro" id="IPR008909">
    <property type="entry name" value="DALR_anticod-bd"/>
</dbReference>
<dbReference type="InterPro" id="IPR014729">
    <property type="entry name" value="Rossmann-like_a/b/a_fold"/>
</dbReference>
<dbReference type="InterPro" id="IPR009080">
    <property type="entry name" value="tRNAsynth_Ia_anticodon-bd"/>
</dbReference>
<dbReference type="NCBIfam" id="TIGR00456">
    <property type="entry name" value="argS"/>
    <property type="match status" value="1"/>
</dbReference>
<dbReference type="PANTHER" id="PTHR11956:SF5">
    <property type="entry name" value="ARGININE--TRNA LIGASE, CYTOPLASMIC"/>
    <property type="match status" value="1"/>
</dbReference>
<dbReference type="PANTHER" id="PTHR11956">
    <property type="entry name" value="ARGINYL-TRNA SYNTHETASE"/>
    <property type="match status" value="1"/>
</dbReference>
<dbReference type="Pfam" id="PF03485">
    <property type="entry name" value="Arg_tRNA_synt_N"/>
    <property type="match status" value="1"/>
</dbReference>
<dbReference type="Pfam" id="PF05746">
    <property type="entry name" value="DALR_1"/>
    <property type="match status" value="1"/>
</dbReference>
<dbReference type="Pfam" id="PF00750">
    <property type="entry name" value="tRNA-synt_1d"/>
    <property type="match status" value="2"/>
</dbReference>
<dbReference type="PRINTS" id="PR01038">
    <property type="entry name" value="TRNASYNTHARG"/>
</dbReference>
<dbReference type="SMART" id="SM01016">
    <property type="entry name" value="Arg_tRNA_synt_N"/>
    <property type="match status" value="1"/>
</dbReference>
<dbReference type="SMART" id="SM00836">
    <property type="entry name" value="DALR_1"/>
    <property type="match status" value="1"/>
</dbReference>
<dbReference type="SUPFAM" id="SSF47323">
    <property type="entry name" value="Anticodon-binding domain of a subclass of class I aminoacyl-tRNA synthetases"/>
    <property type="match status" value="1"/>
</dbReference>
<dbReference type="SUPFAM" id="SSF55190">
    <property type="entry name" value="Arginyl-tRNA synthetase (ArgRS), N-terminal 'additional' domain"/>
    <property type="match status" value="1"/>
</dbReference>
<dbReference type="SUPFAM" id="SSF52374">
    <property type="entry name" value="Nucleotidylyl transferase"/>
    <property type="match status" value="1"/>
</dbReference>
<dbReference type="PROSITE" id="PS00178">
    <property type="entry name" value="AA_TRNA_LIGASE_I"/>
    <property type="match status" value="1"/>
</dbReference>
<organism>
    <name type="scientific">Halorhodospira halophila (strain DSM 244 / SL1)</name>
    <name type="common">Ectothiorhodospira halophila (strain DSM 244 / SL1)</name>
    <dbReference type="NCBI Taxonomy" id="349124"/>
    <lineage>
        <taxon>Bacteria</taxon>
        <taxon>Pseudomonadati</taxon>
        <taxon>Pseudomonadota</taxon>
        <taxon>Gammaproteobacteria</taxon>
        <taxon>Chromatiales</taxon>
        <taxon>Ectothiorhodospiraceae</taxon>
        <taxon>Halorhodospira</taxon>
    </lineage>
</organism>
<feature type="chain" id="PRO_1000018038" description="Arginine--tRNA ligase">
    <location>
        <begin position="1"/>
        <end position="584"/>
    </location>
</feature>
<feature type="short sequence motif" description="'HIGH' region">
    <location>
        <begin position="129"/>
        <end position="139"/>
    </location>
</feature>
<reference key="1">
    <citation type="submission" date="2006-12" db="EMBL/GenBank/DDBJ databases">
        <title>Complete sequence of Halorhodospira halophila SL1.</title>
        <authorList>
            <consortium name="US DOE Joint Genome Institute"/>
            <person name="Copeland A."/>
            <person name="Lucas S."/>
            <person name="Lapidus A."/>
            <person name="Barry K."/>
            <person name="Detter J.C."/>
            <person name="Glavina del Rio T."/>
            <person name="Hammon N."/>
            <person name="Israni S."/>
            <person name="Dalin E."/>
            <person name="Tice H."/>
            <person name="Pitluck S."/>
            <person name="Saunders E."/>
            <person name="Brettin T."/>
            <person name="Bruce D."/>
            <person name="Han C."/>
            <person name="Tapia R."/>
            <person name="Schmutz J."/>
            <person name="Larimer F."/>
            <person name="Land M."/>
            <person name="Hauser L."/>
            <person name="Kyrpides N."/>
            <person name="Mikhailova N."/>
            <person name="Hoff W."/>
            <person name="Richardson P."/>
        </authorList>
    </citation>
    <scope>NUCLEOTIDE SEQUENCE [LARGE SCALE GENOMIC DNA]</scope>
    <source>
        <strain>DSM 244 / SL1</strain>
    </source>
</reference>
<gene>
    <name evidence="1" type="primary">argS</name>
    <name type="ordered locus">Hhal_2416</name>
</gene>
<keyword id="KW-0030">Aminoacyl-tRNA synthetase</keyword>
<keyword id="KW-0067">ATP-binding</keyword>
<keyword id="KW-0963">Cytoplasm</keyword>
<keyword id="KW-0436">Ligase</keyword>
<keyword id="KW-0547">Nucleotide-binding</keyword>
<keyword id="KW-0648">Protein biosynthesis</keyword>
<keyword id="KW-1185">Reference proteome</keyword>
<accession>A1WZR7</accession>